<reference key="1">
    <citation type="journal article" date="2011" name="J. Bacteriol.">
        <title>Comparative genomics of 28 Salmonella enterica isolates: evidence for CRISPR-mediated adaptive sublineage evolution.</title>
        <authorList>
            <person name="Fricke W.F."/>
            <person name="Mammel M.K."/>
            <person name="McDermott P.F."/>
            <person name="Tartera C."/>
            <person name="White D.G."/>
            <person name="Leclerc J.E."/>
            <person name="Ravel J."/>
            <person name="Cebula T.A."/>
        </authorList>
    </citation>
    <scope>NUCLEOTIDE SEQUENCE [LARGE SCALE GENOMIC DNA]</scope>
    <source>
        <strain>SL254</strain>
    </source>
</reference>
<evidence type="ECO:0000255" key="1">
    <source>
        <dbReference type="HAMAP-Rule" id="MF_00033"/>
    </source>
</evidence>
<comment type="function">
    <text evidence="1">Cell wall formation. Catalyzes the transfer of a GlcNAc subunit on undecaprenyl-pyrophosphoryl-MurNAc-pentapeptide (lipid intermediate I) to form undecaprenyl-pyrophosphoryl-MurNAc-(pentapeptide)GlcNAc (lipid intermediate II).</text>
</comment>
<comment type="catalytic activity">
    <reaction evidence="1">
        <text>di-trans,octa-cis-undecaprenyl diphospho-N-acetyl-alpha-D-muramoyl-L-alanyl-D-glutamyl-meso-2,6-diaminopimeloyl-D-alanyl-D-alanine + UDP-N-acetyl-alpha-D-glucosamine = di-trans,octa-cis-undecaprenyl diphospho-[N-acetyl-alpha-D-glucosaminyl-(1-&gt;4)]-N-acetyl-alpha-D-muramoyl-L-alanyl-D-glutamyl-meso-2,6-diaminopimeloyl-D-alanyl-D-alanine + UDP + H(+)</text>
        <dbReference type="Rhea" id="RHEA:31227"/>
        <dbReference type="ChEBI" id="CHEBI:15378"/>
        <dbReference type="ChEBI" id="CHEBI:57705"/>
        <dbReference type="ChEBI" id="CHEBI:58223"/>
        <dbReference type="ChEBI" id="CHEBI:61387"/>
        <dbReference type="ChEBI" id="CHEBI:61388"/>
        <dbReference type="EC" id="2.4.1.227"/>
    </reaction>
</comment>
<comment type="pathway">
    <text evidence="1">Cell wall biogenesis; peptidoglycan biosynthesis.</text>
</comment>
<comment type="subcellular location">
    <subcellularLocation>
        <location evidence="1">Cell inner membrane</location>
        <topology evidence="1">Peripheral membrane protein</topology>
        <orientation evidence="1">Cytoplasmic side</orientation>
    </subcellularLocation>
</comment>
<comment type="similarity">
    <text evidence="1">Belongs to the glycosyltransferase 28 family. MurG subfamily.</text>
</comment>
<name>MURG_SALNS</name>
<protein>
    <recommendedName>
        <fullName evidence="1">UDP-N-acetylglucosamine--N-acetylmuramyl-(pentapeptide) pyrophosphoryl-undecaprenol N-acetylglucosamine transferase</fullName>
        <ecNumber evidence="1">2.4.1.227</ecNumber>
    </recommendedName>
    <alternativeName>
        <fullName evidence="1">Undecaprenyl-PP-MurNAc-pentapeptide-UDPGlcNAc GlcNAc transferase</fullName>
    </alternativeName>
</protein>
<feature type="chain" id="PRO_1000090470" description="UDP-N-acetylglucosamine--N-acetylmuramyl-(pentapeptide) pyrophosphoryl-undecaprenol N-acetylglucosamine transferase">
    <location>
        <begin position="1"/>
        <end position="355"/>
    </location>
</feature>
<feature type="binding site" evidence="1">
    <location>
        <begin position="15"/>
        <end position="17"/>
    </location>
    <ligand>
        <name>UDP-N-acetyl-alpha-D-glucosamine</name>
        <dbReference type="ChEBI" id="CHEBI:57705"/>
    </ligand>
</feature>
<feature type="binding site" evidence="1">
    <location>
        <position position="127"/>
    </location>
    <ligand>
        <name>UDP-N-acetyl-alpha-D-glucosamine</name>
        <dbReference type="ChEBI" id="CHEBI:57705"/>
    </ligand>
</feature>
<feature type="binding site" evidence="1">
    <location>
        <position position="163"/>
    </location>
    <ligand>
        <name>UDP-N-acetyl-alpha-D-glucosamine</name>
        <dbReference type="ChEBI" id="CHEBI:57705"/>
    </ligand>
</feature>
<feature type="binding site" evidence="1">
    <location>
        <position position="191"/>
    </location>
    <ligand>
        <name>UDP-N-acetyl-alpha-D-glucosamine</name>
        <dbReference type="ChEBI" id="CHEBI:57705"/>
    </ligand>
</feature>
<feature type="binding site" evidence="1">
    <location>
        <position position="244"/>
    </location>
    <ligand>
        <name>UDP-N-acetyl-alpha-D-glucosamine</name>
        <dbReference type="ChEBI" id="CHEBI:57705"/>
    </ligand>
</feature>
<feature type="binding site" evidence="1">
    <location>
        <begin position="263"/>
        <end position="268"/>
    </location>
    <ligand>
        <name>UDP-N-acetyl-alpha-D-glucosamine</name>
        <dbReference type="ChEBI" id="CHEBI:57705"/>
    </ligand>
</feature>
<feature type="binding site" evidence="1">
    <location>
        <position position="288"/>
    </location>
    <ligand>
        <name>UDP-N-acetyl-alpha-D-glucosamine</name>
        <dbReference type="ChEBI" id="CHEBI:57705"/>
    </ligand>
</feature>
<sequence length="355" mass="37917">MSGQPKRLMVMAGGTGGHVFPGLAVAHHLMAQGWQVRWLGTADRMEADLVPKHGIDIDFIRISGLRGKGVKALLAAPLRIFNAWRQARAIMKRFKPDVVLGMGGYVSGPGGLAAWSLGIPVVLHEQNGIAGLTNQWLAKIATTVMQAFPGAFPNAEVVGNPVRTDVLALPLPQERLAGRDGPIRVLVVGGSQGARVLNQTLPQVAARLGDTVTIWHQSGKGAQHTVEQAYAGVGQSQHKVTEFIDDMAAAYAWADVVVCRSGALTVSEIAAAGLPAIFVPFQHKDRQQYWNALPLENAGAAKIFEQPQFTVEAVADTLAGWSREALLTMAERARAVSIPDATERVASEVSRVART</sequence>
<gene>
    <name evidence="1" type="primary">murG</name>
    <name type="ordered locus">SNSL254_A0140</name>
</gene>
<organism>
    <name type="scientific">Salmonella newport (strain SL254)</name>
    <dbReference type="NCBI Taxonomy" id="423368"/>
    <lineage>
        <taxon>Bacteria</taxon>
        <taxon>Pseudomonadati</taxon>
        <taxon>Pseudomonadota</taxon>
        <taxon>Gammaproteobacteria</taxon>
        <taxon>Enterobacterales</taxon>
        <taxon>Enterobacteriaceae</taxon>
        <taxon>Salmonella</taxon>
    </lineage>
</organism>
<proteinExistence type="inferred from homology"/>
<dbReference type="EC" id="2.4.1.227" evidence="1"/>
<dbReference type="EMBL" id="CP001113">
    <property type="protein sequence ID" value="ACF62198.1"/>
    <property type="molecule type" value="Genomic_DNA"/>
</dbReference>
<dbReference type="RefSeq" id="WP_000016610.1">
    <property type="nucleotide sequence ID" value="NZ_CCMR01000003.1"/>
</dbReference>
<dbReference type="SMR" id="B4SU50"/>
<dbReference type="CAZy" id="GT28">
    <property type="family name" value="Glycosyltransferase Family 28"/>
</dbReference>
<dbReference type="KEGG" id="see:SNSL254_A0140"/>
<dbReference type="HOGENOM" id="CLU_037404_2_0_6"/>
<dbReference type="UniPathway" id="UPA00219"/>
<dbReference type="Proteomes" id="UP000008824">
    <property type="component" value="Chromosome"/>
</dbReference>
<dbReference type="GO" id="GO:0005886">
    <property type="term" value="C:plasma membrane"/>
    <property type="evidence" value="ECO:0007669"/>
    <property type="project" value="UniProtKB-SubCell"/>
</dbReference>
<dbReference type="GO" id="GO:0051991">
    <property type="term" value="F:UDP-N-acetyl-D-glucosamine:N-acetylmuramoyl-L-alanyl-D-glutamyl-meso-2,6-diaminopimelyl-D-alanyl-D-alanine-diphosphoundecaprenol 4-beta-N-acetylglucosaminlytransferase activity"/>
    <property type="evidence" value="ECO:0007669"/>
    <property type="project" value="RHEA"/>
</dbReference>
<dbReference type="GO" id="GO:0050511">
    <property type="term" value="F:undecaprenyldiphospho-muramoylpentapeptide beta-N-acetylglucosaminyltransferase activity"/>
    <property type="evidence" value="ECO:0007669"/>
    <property type="project" value="UniProtKB-UniRule"/>
</dbReference>
<dbReference type="GO" id="GO:0005975">
    <property type="term" value="P:carbohydrate metabolic process"/>
    <property type="evidence" value="ECO:0007669"/>
    <property type="project" value="InterPro"/>
</dbReference>
<dbReference type="GO" id="GO:0051301">
    <property type="term" value="P:cell division"/>
    <property type="evidence" value="ECO:0007669"/>
    <property type="project" value="UniProtKB-KW"/>
</dbReference>
<dbReference type="GO" id="GO:0071555">
    <property type="term" value="P:cell wall organization"/>
    <property type="evidence" value="ECO:0007669"/>
    <property type="project" value="UniProtKB-KW"/>
</dbReference>
<dbReference type="GO" id="GO:0030259">
    <property type="term" value="P:lipid glycosylation"/>
    <property type="evidence" value="ECO:0007669"/>
    <property type="project" value="UniProtKB-UniRule"/>
</dbReference>
<dbReference type="GO" id="GO:0009252">
    <property type="term" value="P:peptidoglycan biosynthetic process"/>
    <property type="evidence" value="ECO:0007669"/>
    <property type="project" value="UniProtKB-UniRule"/>
</dbReference>
<dbReference type="GO" id="GO:0008360">
    <property type="term" value="P:regulation of cell shape"/>
    <property type="evidence" value="ECO:0007669"/>
    <property type="project" value="UniProtKB-KW"/>
</dbReference>
<dbReference type="CDD" id="cd03785">
    <property type="entry name" value="GT28_MurG"/>
    <property type="match status" value="1"/>
</dbReference>
<dbReference type="FunFam" id="3.40.50.2000:FF:000016">
    <property type="entry name" value="UDP-N-acetylglucosamine--N-acetylmuramyl-(pentapeptide) pyrophosphoryl-undecaprenol N-acetylglucosamine transferase"/>
    <property type="match status" value="1"/>
</dbReference>
<dbReference type="FunFam" id="3.40.50.2000:FF:000018">
    <property type="entry name" value="UDP-N-acetylglucosamine--N-acetylmuramyl-(pentapeptide) pyrophosphoryl-undecaprenol N-acetylglucosamine transferase"/>
    <property type="match status" value="1"/>
</dbReference>
<dbReference type="Gene3D" id="3.40.50.2000">
    <property type="entry name" value="Glycogen Phosphorylase B"/>
    <property type="match status" value="2"/>
</dbReference>
<dbReference type="HAMAP" id="MF_00033">
    <property type="entry name" value="MurG"/>
    <property type="match status" value="1"/>
</dbReference>
<dbReference type="InterPro" id="IPR006009">
    <property type="entry name" value="GlcNAc_MurG"/>
</dbReference>
<dbReference type="InterPro" id="IPR007235">
    <property type="entry name" value="Glyco_trans_28_C"/>
</dbReference>
<dbReference type="InterPro" id="IPR004276">
    <property type="entry name" value="GlycoTrans_28_N"/>
</dbReference>
<dbReference type="NCBIfam" id="TIGR01133">
    <property type="entry name" value="murG"/>
    <property type="match status" value="1"/>
</dbReference>
<dbReference type="PANTHER" id="PTHR21015:SF22">
    <property type="entry name" value="GLYCOSYLTRANSFERASE"/>
    <property type="match status" value="1"/>
</dbReference>
<dbReference type="PANTHER" id="PTHR21015">
    <property type="entry name" value="UDP-N-ACETYLGLUCOSAMINE--N-ACETYLMURAMYL-(PENTAPEPTIDE) PYROPHOSPHORYL-UNDECAPRENOL N-ACETYLGLUCOSAMINE TRANSFERASE 1"/>
    <property type="match status" value="1"/>
</dbReference>
<dbReference type="Pfam" id="PF04101">
    <property type="entry name" value="Glyco_tran_28_C"/>
    <property type="match status" value="1"/>
</dbReference>
<dbReference type="Pfam" id="PF03033">
    <property type="entry name" value="Glyco_transf_28"/>
    <property type="match status" value="1"/>
</dbReference>
<dbReference type="SUPFAM" id="SSF53756">
    <property type="entry name" value="UDP-Glycosyltransferase/glycogen phosphorylase"/>
    <property type="match status" value="1"/>
</dbReference>
<keyword id="KW-0131">Cell cycle</keyword>
<keyword id="KW-0132">Cell division</keyword>
<keyword id="KW-0997">Cell inner membrane</keyword>
<keyword id="KW-1003">Cell membrane</keyword>
<keyword id="KW-0133">Cell shape</keyword>
<keyword id="KW-0961">Cell wall biogenesis/degradation</keyword>
<keyword id="KW-0328">Glycosyltransferase</keyword>
<keyword id="KW-0472">Membrane</keyword>
<keyword id="KW-0573">Peptidoglycan synthesis</keyword>
<keyword id="KW-0808">Transferase</keyword>
<accession>B4SU50</accession>